<evidence type="ECO:0000255" key="1">
    <source>
        <dbReference type="HAMAP-Rule" id="MF_01363"/>
    </source>
</evidence>
<evidence type="ECO:0000305" key="2"/>
<reference key="1">
    <citation type="journal article" date="2002" name="DNA Res.">
        <title>Complete genome structure of the thermophilic cyanobacterium Thermosynechococcus elongatus BP-1.</title>
        <authorList>
            <person name="Nakamura Y."/>
            <person name="Kaneko T."/>
            <person name="Sato S."/>
            <person name="Ikeuchi M."/>
            <person name="Katoh H."/>
            <person name="Sasamoto S."/>
            <person name="Watanabe A."/>
            <person name="Iriguchi M."/>
            <person name="Kawashima K."/>
            <person name="Kimura T."/>
            <person name="Kishida Y."/>
            <person name="Kiyokawa C."/>
            <person name="Kohara M."/>
            <person name="Matsumoto M."/>
            <person name="Matsuno A."/>
            <person name="Nakazaki N."/>
            <person name="Shimpo S."/>
            <person name="Sugimoto M."/>
            <person name="Takeuchi C."/>
            <person name="Yamada M."/>
            <person name="Tabata S."/>
        </authorList>
    </citation>
    <scope>NUCLEOTIDE SEQUENCE [LARGE SCALE GENOMIC DNA]</scope>
    <source>
        <strain>NIES-2133 / IAM M-273 / BP-1</strain>
    </source>
</reference>
<gene>
    <name evidence="1" type="primary">rplU</name>
    <name evidence="1" type="synonym">rpl21</name>
    <name type="ordered locus">tll0167</name>
</gene>
<dbReference type="EMBL" id="BA000039">
    <property type="protein sequence ID" value="BAC07720.1"/>
    <property type="molecule type" value="Genomic_DNA"/>
</dbReference>
<dbReference type="RefSeq" id="NP_680958.1">
    <property type="nucleotide sequence ID" value="NC_004113.1"/>
</dbReference>
<dbReference type="RefSeq" id="WP_011056022.1">
    <property type="nucleotide sequence ID" value="NC_004113.1"/>
</dbReference>
<dbReference type="SMR" id="Q8DMF1"/>
<dbReference type="STRING" id="197221.gene:10746747"/>
<dbReference type="EnsemblBacteria" id="BAC07720">
    <property type="protein sequence ID" value="BAC07720"/>
    <property type="gene ID" value="BAC07720"/>
</dbReference>
<dbReference type="KEGG" id="tel:tll0167"/>
<dbReference type="PATRIC" id="fig|197221.4.peg.173"/>
<dbReference type="eggNOG" id="COG0261">
    <property type="taxonomic scope" value="Bacteria"/>
</dbReference>
<dbReference type="Proteomes" id="UP000000440">
    <property type="component" value="Chromosome"/>
</dbReference>
<dbReference type="GO" id="GO:0005737">
    <property type="term" value="C:cytoplasm"/>
    <property type="evidence" value="ECO:0007669"/>
    <property type="project" value="UniProtKB-ARBA"/>
</dbReference>
<dbReference type="GO" id="GO:1990904">
    <property type="term" value="C:ribonucleoprotein complex"/>
    <property type="evidence" value="ECO:0007669"/>
    <property type="project" value="UniProtKB-KW"/>
</dbReference>
<dbReference type="GO" id="GO:0005840">
    <property type="term" value="C:ribosome"/>
    <property type="evidence" value="ECO:0007669"/>
    <property type="project" value="UniProtKB-KW"/>
</dbReference>
<dbReference type="GO" id="GO:0019843">
    <property type="term" value="F:rRNA binding"/>
    <property type="evidence" value="ECO:0007669"/>
    <property type="project" value="UniProtKB-UniRule"/>
</dbReference>
<dbReference type="GO" id="GO:0003735">
    <property type="term" value="F:structural constituent of ribosome"/>
    <property type="evidence" value="ECO:0007669"/>
    <property type="project" value="InterPro"/>
</dbReference>
<dbReference type="GO" id="GO:0006412">
    <property type="term" value="P:translation"/>
    <property type="evidence" value="ECO:0007669"/>
    <property type="project" value="UniProtKB-UniRule"/>
</dbReference>
<dbReference type="HAMAP" id="MF_01363">
    <property type="entry name" value="Ribosomal_bL21"/>
    <property type="match status" value="1"/>
</dbReference>
<dbReference type="InterPro" id="IPR028909">
    <property type="entry name" value="bL21-like"/>
</dbReference>
<dbReference type="InterPro" id="IPR036164">
    <property type="entry name" value="bL21-like_sf"/>
</dbReference>
<dbReference type="InterPro" id="IPR001787">
    <property type="entry name" value="Ribosomal_bL21"/>
</dbReference>
<dbReference type="InterPro" id="IPR018258">
    <property type="entry name" value="Ribosomal_bL21_CS"/>
</dbReference>
<dbReference type="NCBIfam" id="TIGR00061">
    <property type="entry name" value="L21"/>
    <property type="match status" value="1"/>
</dbReference>
<dbReference type="PANTHER" id="PTHR21349">
    <property type="entry name" value="50S RIBOSOMAL PROTEIN L21"/>
    <property type="match status" value="1"/>
</dbReference>
<dbReference type="PANTHER" id="PTHR21349:SF0">
    <property type="entry name" value="LARGE RIBOSOMAL SUBUNIT PROTEIN BL21M"/>
    <property type="match status" value="1"/>
</dbReference>
<dbReference type="Pfam" id="PF00829">
    <property type="entry name" value="Ribosomal_L21p"/>
    <property type="match status" value="1"/>
</dbReference>
<dbReference type="SUPFAM" id="SSF141091">
    <property type="entry name" value="L21p-like"/>
    <property type="match status" value="1"/>
</dbReference>
<dbReference type="PROSITE" id="PS01169">
    <property type="entry name" value="RIBOSOMAL_L21"/>
    <property type="match status" value="1"/>
</dbReference>
<accession>Q8DMF1</accession>
<keyword id="KW-1185">Reference proteome</keyword>
<keyword id="KW-0687">Ribonucleoprotein</keyword>
<keyword id="KW-0689">Ribosomal protein</keyword>
<keyword id="KW-0694">RNA-binding</keyword>
<keyword id="KW-0699">rRNA-binding</keyword>
<sequence length="111" mass="12567">MAYAIIETGGKQLRVEPGRFYDVERLPIEPEGTIDLEQVLLVQTDSQVHVGQPYVSGAVVSGTVMEHRRGPKVIVYKMRPKKKTRRKKGHRQELTRIMINEIRLNGESLGG</sequence>
<feature type="chain" id="PRO_0000269405" description="Large ribosomal subunit protein bL21">
    <location>
        <begin position="1"/>
        <end position="111"/>
    </location>
</feature>
<organism>
    <name type="scientific">Thermosynechococcus vestitus (strain NIES-2133 / IAM M-273 / BP-1)</name>
    <dbReference type="NCBI Taxonomy" id="197221"/>
    <lineage>
        <taxon>Bacteria</taxon>
        <taxon>Bacillati</taxon>
        <taxon>Cyanobacteriota</taxon>
        <taxon>Cyanophyceae</taxon>
        <taxon>Acaryochloridales</taxon>
        <taxon>Thermosynechococcaceae</taxon>
        <taxon>Thermosynechococcus</taxon>
    </lineage>
</organism>
<proteinExistence type="inferred from homology"/>
<protein>
    <recommendedName>
        <fullName evidence="1">Large ribosomal subunit protein bL21</fullName>
    </recommendedName>
    <alternativeName>
        <fullName evidence="2">50S ribosomal protein L21</fullName>
    </alternativeName>
</protein>
<name>RL21_THEVB</name>
<comment type="function">
    <text evidence="1">This protein binds to 23S rRNA in the presence of protein L20.</text>
</comment>
<comment type="subunit">
    <text evidence="1">Part of the 50S ribosomal subunit. Contacts protein L20.</text>
</comment>
<comment type="similarity">
    <text evidence="1">Belongs to the bacterial ribosomal protein bL21 family.</text>
</comment>